<name>PHOR_HAEIN</name>
<sequence>MKKILNFIVEINLAIIISLFTSDFILWFAIILLLILAWHHINEYRLLKYLNLKQDNKFSLLQLGTFSQTEAYHRHQIYKEKCASLRLLSQINKNIKYLPDAIIICQHNGNISWCNSIAPQMFDFCWDKKVQENIFDVIFYEQFKHYFFSPKKRRPLVLLTYNQRYIEVQSHAYNSHMILVIARDITDMIHLLNSRQKFLSNINHELRTPLTVLQGYLEILADNNIQNPLQKKAIXAMQEQSQRMEHLLQQFNFLAKIETTSDKDFRKFDMSAMINSLRKDTDILNTYNHHIEFIIQPNIIIFGNESQLRSAVSNLIYNAIKHSGKQCHIQIQWETCEQGIKFNVIDNGVGISPQHIPHLTERFYRVDESRSHLTGGSGLGLAIVKHTLLQYHSHLNIESTETKGSSFSFIIPKRFVISKNNKEIQ</sequence>
<gene>
    <name type="primary">phoR</name>
    <name type="ordered locus">HI_1378</name>
</gene>
<organism>
    <name type="scientific">Haemophilus influenzae (strain ATCC 51907 / DSM 11121 / KW20 / Rd)</name>
    <dbReference type="NCBI Taxonomy" id="71421"/>
    <lineage>
        <taxon>Bacteria</taxon>
        <taxon>Pseudomonadati</taxon>
        <taxon>Pseudomonadota</taxon>
        <taxon>Gammaproteobacteria</taxon>
        <taxon>Pasteurellales</taxon>
        <taxon>Pasteurellaceae</taxon>
        <taxon>Haemophilus</taxon>
    </lineage>
</organism>
<evidence type="ECO:0000250" key="1"/>
<evidence type="ECO:0000255" key="2"/>
<evidence type="ECO:0000255" key="3">
    <source>
        <dbReference type="PROSITE-ProRule" id="PRU00107"/>
    </source>
</evidence>
<evidence type="ECO:0000305" key="4"/>
<reference key="1">
    <citation type="journal article" date="1995" name="Science">
        <title>Whole-genome random sequencing and assembly of Haemophilus influenzae Rd.</title>
        <authorList>
            <person name="Fleischmann R.D."/>
            <person name="Adams M.D."/>
            <person name="White O."/>
            <person name="Clayton R.A."/>
            <person name="Kirkness E.F."/>
            <person name="Kerlavage A.R."/>
            <person name="Bult C.J."/>
            <person name="Tomb J.-F."/>
            <person name="Dougherty B.A."/>
            <person name="Merrick J.M."/>
            <person name="McKenney K."/>
            <person name="Sutton G.G."/>
            <person name="FitzHugh W."/>
            <person name="Fields C.A."/>
            <person name="Gocayne J.D."/>
            <person name="Scott J.D."/>
            <person name="Shirley R."/>
            <person name="Liu L.-I."/>
            <person name="Glodek A."/>
            <person name="Kelley J.M."/>
            <person name="Weidman J.F."/>
            <person name="Phillips C.A."/>
            <person name="Spriggs T."/>
            <person name="Hedblom E."/>
            <person name="Cotton M.D."/>
            <person name="Utterback T.R."/>
            <person name="Hanna M.C."/>
            <person name="Nguyen D.T."/>
            <person name="Saudek D.M."/>
            <person name="Brandon R.C."/>
            <person name="Fine L.D."/>
            <person name="Fritchman J.L."/>
            <person name="Fuhrmann J.L."/>
            <person name="Geoghagen N.S.M."/>
            <person name="Gnehm C.L."/>
            <person name="McDonald L.A."/>
            <person name="Small K.V."/>
            <person name="Fraser C.M."/>
            <person name="Smith H.O."/>
            <person name="Venter J.C."/>
        </authorList>
    </citation>
    <scope>NUCLEOTIDE SEQUENCE [LARGE SCALE GENOMIC DNA]</scope>
    <source>
        <strain>ATCC 51907 / DSM 11121 / KW20 / Rd</strain>
    </source>
</reference>
<dbReference type="EC" id="2.7.13.3"/>
<dbReference type="EMBL" id="L42023">
    <property type="protein sequence ID" value="AAC23024.1"/>
    <property type="molecule type" value="Genomic_DNA"/>
</dbReference>
<dbReference type="RefSeq" id="NP_439530.1">
    <property type="nucleotide sequence ID" value="NC_000907.1"/>
</dbReference>
<dbReference type="STRING" id="71421.HI_1378"/>
<dbReference type="EnsemblBacteria" id="AAC23024">
    <property type="protein sequence ID" value="AAC23024"/>
    <property type="gene ID" value="HI_1378"/>
</dbReference>
<dbReference type="KEGG" id="hin:HI_1378"/>
<dbReference type="PATRIC" id="fig|71421.8.peg.1433"/>
<dbReference type="eggNOG" id="COG5002">
    <property type="taxonomic scope" value="Bacteria"/>
</dbReference>
<dbReference type="HOGENOM" id="CLU_000445_89_2_6"/>
<dbReference type="OrthoDB" id="9813151at2"/>
<dbReference type="PhylomeDB" id="P71380"/>
<dbReference type="BioCyc" id="HINF71421:G1GJ1-1404-MONOMER"/>
<dbReference type="BRENDA" id="2.7.13.3">
    <property type="organism ID" value="2529"/>
</dbReference>
<dbReference type="Proteomes" id="UP000000579">
    <property type="component" value="Chromosome"/>
</dbReference>
<dbReference type="GO" id="GO:0005886">
    <property type="term" value="C:plasma membrane"/>
    <property type="evidence" value="ECO:0000318"/>
    <property type="project" value="GO_Central"/>
</dbReference>
<dbReference type="GO" id="GO:0005524">
    <property type="term" value="F:ATP binding"/>
    <property type="evidence" value="ECO:0007669"/>
    <property type="project" value="UniProtKB-KW"/>
</dbReference>
<dbReference type="GO" id="GO:0004721">
    <property type="term" value="F:phosphoprotein phosphatase activity"/>
    <property type="evidence" value="ECO:0000318"/>
    <property type="project" value="GO_Central"/>
</dbReference>
<dbReference type="GO" id="GO:0000155">
    <property type="term" value="F:phosphorelay sensor kinase activity"/>
    <property type="evidence" value="ECO:0000318"/>
    <property type="project" value="GO_Central"/>
</dbReference>
<dbReference type="GO" id="GO:0016036">
    <property type="term" value="P:cellular response to phosphate starvation"/>
    <property type="evidence" value="ECO:0000318"/>
    <property type="project" value="GO_Central"/>
</dbReference>
<dbReference type="GO" id="GO:0006817">
    <property type="term" value="P:phosphate ion transport"/>
    <property type="evidence" value="ECO:0007669"/>
    <property type="project" value="UniProtKB-KW"/>
</dbReference>
<dbReference type="CDD" id="cd00082">
    <property type="entry name" value="HisKA"/>
    <property type="match status" value="1"/>
</dbReference>
<dbReference type="CDD" id="cd00130">
    <property type="entry name" value="PAS"/>
    <property type="match status" value="1"/>
</dbReference>
<dbReference type="FunFam" id="3.30.565.10:FF:000006">
    <property type="entry name" value="Sensor histidine kinase WalK"/>
    <property type="match status" value="1"/>
</dbReference>
<dbReference type="FunFam" id="1.10.287.130:FF:000001">
    <property type="entry name" value="Two-component sensor histidine kinase"/>
    <property type="match status" value="1"/>
</dbReference>
<dbReference type="Gene3D" id="1.10.287.130">
    <property type="match status" value="1"/>
</dbReference>
<dbReference type="Gene3D" id="3.30.565.10">
    <property type="entry name" value="Histidine kinase-like ATPase, C-terminal domain"/>
    <property type="match status" value="1"/>
</dbReference>
<dbReference type="InterPro" id="IPR050351">
    <property type="entry name" value="2-comp_sensor_kinase"/>
</dbReference>
<dbReference type="InterPro" id="IPR036890">
    <property type="entry name" value="HATPase_C_sf"/>
</dbReference>
<dbReference type="InterPro" id="IPR005467">
    <property type="entry name" value="His_kinase_dom"/>
</dbReference>
<dbReference type="InterPro" id="IPR003661">
    <property type="entry name" value="HisK_dim/P_dom"/>
</dbReference>
<dbReference type="InterPro" id="IPR036097">
    <property type="entry name" value="HisK_dim/P_sf"/>
</dbReference>
<dbReference type="InterPro" id="IPR000014">
    <property type="entry name" value="PAS"/>
</dbReference>
<dbReference type="InterPro" id="IPR035965">
    <property type="entry name" value="PAS-like_dom_sf"/>
</dbReference>
<dbReference type="InterPro" id="IPR004358">
    <property type="entry name" value="Sig_transdc_His_kin-like_C"/>
</dbReference>
<dbReference type="InterPro" id="IPR014310">
    <property type="entry name" value="Sig_transdc_His_kinase_PhoR"/>
</dbReference>
<dbReference type="NCBIfam" id="TIGR02966">
    <property type="entry name" value="phoR_proteo"/>
    <property type="match status" value="1"/>
</dbReference>
<dbReference type="PANTHER" id="PTHR45453">
    <property type="entry name" value="PHOSPHATE REGULON SENSOR PROTEIN PHOR"/>
    <property type="match status" value="1"/>
</dbReference>
<dbReference type="PANTHER" id="PTHR45453:SF1">
    <property type="entry name" value="PHOSPHATE REGULON SENSOR PROTEIN PHOR"/>
    <property type="match status" value="1"/>
</dbReference>
<dbReference type="Pfam" id="PF02518">
    <property type="entry name" value="HATPase_c"/>
    <property type="match status" value="1"/>
</dbReference>
<dbReference type="Pfam" id="PF00512">
    <property type="entry name" value="HisKA"/>
    <property type="match status" value="1"/>
</dbReference>
<dbReference type="PRINTS" id="PR00344">
    <property type="entry name" value="BCTRLSENSOR"/>
</dbReference>
<dbReference type="SMART" id="SM00387">
    <property type="entry name" value="HATPase_c"/>
    <property type="match status" value="1"/>
</dbReference>
<dbReference type="SMART" id="SM00388">
    <property type="entry name" value="HisKA"/>
    <property type="match status" value="1"/>
</dbReference>
<dbReference type="SMART" id="SM00091">
    <property type="entry name" value="PAS"/>
    <property type="match status" value="1"/>
</dbReference>
<dbReference type="SUPFAM" id="SSF55874">
    <property type="entry name" value="ATPase domain of HSP90 chaperone/DNA topoisomerase II/histidine kinase"/>
    <property type="match status" value="1"/>
</dbReference>
<dbReference type="SUPFAM" id="SSF47384">
    <property type="entry name" value="Homodimeric domain of signal transducing histidine kinase"/>
    <property type="match status" value="1"/>
</dbReference>
<dbReference type="SUPFAM" id="SSF55785">
    <property type="entry name" value="PYP-like sensor domain (PAS domain)"/>
    <property type="match status" value="1"/>
</dbReference>
<dbReference type="PROSITE" id="PS50109">
    <property type="entry name" value="HIS_KIN"/>
    <property type="match status" value="1"/>
</dbReference>
<comment type="function">
    <text evidence="1">Member of the two-component regulatory system PhoR/PhoB involved in the phosphate regulon genes expression. PhoR may function as a membrane-associated protein kinase that phosphorylates PhoB in response to environmental signals (By similarity).</text>
</comment>
<comment type="catalytic activity">
    <reaction>
        <text>ATP + protein L-histidine = ADP + protein N-phospho-L-histidine.</text>
        <dbReference type="EC" id="2.7.13.3"/>
    </reaction>
</comment>
<comment type="subcellular location">
    <subcellularLocation>
        <location evidence="4">Cell inner membrane</location>
        <topology evidence="4">Single-pass membrane protein</topology>
    </subcellularLocation>
</comment>
<keyword id="KW-0067">ATP-binding</keyword>
<keyword id="KW-0997">Cell inner membrane</keyword>
<keyword id="KW-1003">Cell membrane</keyword>
<keyword id="KW-0418">Kinase</keyword>
<keyword id="KW-0472">Membrane</keyword>
<keyword id="KW-0547">Nucleotide-binding</keyword>
<keyword id="KW-0592">Phosphate transport</keyword>
<keyword id="KW-0597">Phosphoprotein</keyword>
<keyword id="KW-1185">Reference proteome</keyword>
<keyword id="KW-0808">Transferase</keyword>
<keyword id="KW-0812">Transmembrane</keyword>
<keyword id="KW-1133">Transmembrane helix</keyword>
<keyword id="KW-0813">Transport</keyword>
<keyword id="KW-0902">Two-component regulatory system</keyword>
<protein>
    <recommendedName>
        <fullName>Phosphate regulon sensor protein PhoR</fullName>
        <ecNumber>2.7.13.3</ecNumber>
    </recommendedName>
</protein>
<feature type="chain" id="PRO_0000074847" description="Phosphate regulon sensor protein PhoR">
    <location>
        <begin position="1"/>
        <end position="425"/>
    </location>
</feature>
<feature type="transmembrane region" description="Helical" evidence="2">
    <location>
        <begin position="15"/>
        <end position="35"/>
    </location>
</feature>
<feature type="domain" description="PAS">
    <location>
        <begin position="89"/>
        <end position="156"/>
    </location>
</feature>
<feature type="domain" description="Histidine kinase" evidence="3">
    <location>
        <begin position="201"/>
        <end position="415"/>
    </location>
</feature>
<feature type="modified residue" description="Phosphohistidine; by autocatalysis" evidence="3">
    <location>
        <position position="204"/>
    </location>
</feature>
<accession>P71380</accession>
<proteinExistence type="inferred from homology"/>